<gene>
    <name evidence="1" type="primary">pyrD</name>
    <name type="ordered locus">Daci_3988</name>
</gene>
<evidence type="ECO:0000255" key="1">
    <source>
        <dbReference type="HAMAP-Rule" id="MF_00225"/>
    </source>
</evidence>
<proteinExistence type="inferred from homology"/>
<keyword id="KW-1003">Cell membrane</keyword>
<keyword id="KW-0285">Flavoprotein</keyword>
<keyword id="KW-0288">FMN</keyword>
<keyword id="KW-0472">Membrane</keyword>
<keyword id="KW-0560">Oxidoreductase</keyword>
<keyword id="KW-0665">Pyrimidine biosynthesis</keyword>
<keyword id="KW-1185">Reference proteome</keyword>
<sequence>MSLIPYALTRPFLFGMDPESAHDLTMNLMAKGQNTLLQQAWAQPMVSDPVELAGLKFPNRVGMAAGLDKNARCIDALAAMGFGFVEVGTVTPRPQPGNPKPRMFRIPERNALINRLGFNNEGLDAFLSNVKRSQARAQGKPMLLGLNIGKNATTPIEDATSDYLKALDGVYPHADYVTVNISSPNTKNLRALQSDEALDALLGAIAERREQLATQHGKRVPVFVKIAPDLDEEQVGVIAATLQRHGMDGVIATNTTISREAVKGLPYAQETGGLSGAPVLEASNQVIRQLRSALGSRYPIIGVGGILSGEDAVSKIRAGADVVQIYSGLIYRGPALVPETARAIAQLR</sequence>
<comment type="function">
    <text evidence="1">Catalyzes the conversion of dihydroorotate to orotate with quinone as electron acceptor.</text>
</comment>
<comment type="catalytic activity">
    <reaction evidence="1">
        <text>(S)-dihydroorotate + a quinone = orotate + a quinol</text>
        <dbReference type="Rhea" id="RHEA:30187"/>
        <dbReference type="ChEBI" id="CHEBI:24646"/>
        <dbReference type="ChEBI" id="CHEBI:30839"/>
        <dbReference type="ChEBI" id="CHEBI:30864"/>
        <dbReference type="ChEBI" id="CHEBI:132124"/>
        <dbReference type="EC" id="1.3.5.2"/>
    </reaction>
</comment>
<comment type="cofactor">
    <cofactor evidence="1">
        <name>FMN</name>
        <dbReference type="ChEBI" id="CHEBI:58210"/>
    </cofactor>
    <text evidence="1">Binds 1 FMN per subunit.</text>
</comment>
<comment type="pathway">
    <text evidence="1">Pyrimidine metabolism; UMP biosynthesis via de novo pathway; orotate from (S)-dihydroorotate (quinone route): step 1/1.</text>
</comment>
<comment type="subunit">
    <text evidence="1">Monomer.</text>
</comment>
<comment type="subcellular location">
    <subcellularLocation>
        <location evidence="1">Cell membrane</location>
        <topology evidence="1">Peripheral membrane protein</topology>
    </subcellularLocation>
</comment>
<comment type="similarity">
    <text evidence="1">Belongs to the dihydroorotate dehydrogenase family. Type 2 subfamily.</text>
</comment>
<protein>
    <recommendedName>
        <fullName evidence="1">Dihydroorotate dehydrogenase (quinone)</fullName>
        <ecNumber evidence="1">1.3.5.2</ecNumber>
    </recommendedName>
    <alternativeName>
        <fullName evidence="1">DHOdehase</fullName>
        <shortName evidence="1">DHOD</shortName>
        <shortName evidence="1">DHODase</shortName>
    </alternativeName>
    <alternativeName>
        <fullName evidence="1">Dihydroorotate oxidase</fullName>
    </alternativeName>
</protein>
<organism>
    <name type="scientific">Delftia acidovorans (strain DSM 14801 / SPH-1)</name>
    <dbReference type="NCBI Taxonomy" id="398578"/>
    <lineage>
        <taxon>Bacteria</taxon>
        <taxon>Pseudomonadati</taxon>
        <taxon>Pseudomonadota</taxon>
        <taxon>Betaproteobacteria</taxon>
        <taxon>Burkholderiales</taxon>
        <taxon>Comamonadaceae</taxon>
        <taxon>Delftia</taxon>
    </lineage>
</organism>
<reference key="1">
    <citation type="submission" date="2007-11" db="EMBL/GenBank/DDBJ databases">
        <title>Complete sequence of Delftia acidovorans DSM 14801 / SPH-1.</title>
        <authorList>
            <person name="Copeland A."/>
            <person name="Lucas S."/>
            <person name="Lapidus A."/>
            <person name="Barry K."/>
            <person name="Glavina del Rio T."/>
            <person name="Dalin E."/>
            <person name="Tice H."/>
            <person name="Pitluck S."/>
            <person name="Lowry S."/>
            <person name="Clum A."/>
            <person name="Schmutz J."/>
            <person name="Larimer F."/>
            <person name="Land M."/>
            <person name="Hauser L."/>
            <person name="Kyrpides N."/>
            <person name="Kim E."/>
            <person name="Schleheck D."/>
            <person name="Richardson P."/>
        </authorList>
    </citation>
    <scope>NUCLEOTIDE SEQUENCE [LARGE SCALE GENOMIC DNA]</scope>
    <source>
        <strain>DSM 14801 / SPH-1</strain>
    </source>
</reference>
<feature type="chain" id="PRO_1000100260" description="Dihydroorotate dehydrogenase (quinone)">
    <location>
        <begin position="1"/>
        <end position="348"/>
    </location>
</feature>
<feature type="active site" description="Nucleophile" evidence="1">
    <location>
        <position position="183"/>
    </location>
</feature>
<feature type="binding site" evidence="1">
    <location>
        <begin position="65"/>
        <end position="69"/>
    </location>
    <ligand>
        <name>FMN</name>
        <dbReference type="ChEBI" id="CHEBI:58210"/>
    </ligand>
</feature>
<feature type="binding site" evidence="1">
    <location>
        <position position="69"/>
    </location>
    <ligand>
        <name>substrate</name>
    </ligand>
</feature>
<feature type="binding site" evidence="1">
    <location>
        <position position="89"/>
    </location>
    <ligand>
        <name>FMN</name>
        <dbReference type="ChEBI" id="CHEBI:58210"/>
    </ligand>
</feature>
<feature type="binding site" evidence="1">
    <location>
        <begin position="114"/>
        <end position="118"/>
    </location>
    <ligand>
        <name>substrate</name>
    </ligand>
</feature>
<feature type="binding site" evidence="1">
    <location>
        <position position="147"/>
    </location>
    <ligand>
        <name>FMN</name>
        <dbReference type="ChEBI" id="CHEBI:58210"/>
    </ligand>
</feature>
<feature type="binding site" evidence="1">
    <location>
        <position position="180"/>
    </location>
    <ligand>
        <name>FMN</name>
        <dbReference type="ChEBI" id="CHEBI:58210"/>
    </ligand>
</feature>
<feature type="binding site" evidence="1">
    <location>
        <position position="180"/>
    </location>
    <ligand>
        <name>substrate</name>
    </ligand>
</feature>
<feature type="binding site" evidence="1">
    <location>
        <position position="185"/>
    </location>
    <ligand>
        <name>substrate</name>
    </ligand>
</feature>
<feature type="binding site" evidence="1">
    <location>
        <position position="225"/>
    </location>
    <ligand>
        <name>FMN</name>
        <dbReference type="ChEBI" id="CHEBI:58210"/>
    </ligand>
</feature>
<feature type="binding site" evidence="1">
    <location>
        <position position="253"/>
    </location>
    <ligand>
        <name>FMN</name>
        <dbReference type="ChEBI" id="CHEBI:58210"/>
    </ligand>
</feature>
<feature type="binding site" evidence="1">
    <location>
        <begin position="254"/>
        <end position="255"/>
    </location>
    <ligand>
        <name>substrate</name>
    </ligand>
</feature>
<feature type="binding site" evidence="1">
    <location>
        <position position="276"/>
    </location>
    <ligand>
        <name>FMN</name>
        <dbReference type="ChEBI" id="CHEBI:58210"/>
    </ligand>
</feature>
<feature type="binding site" evidence="1">
    <location>
        <position position="305"/>
    </location>
    <ligand>
        <name>FMN</name>
        <dbReference type="ChEBI" id="CHEBI:58210"/>
    </ligand>
</feature>
<feature type="binding site" evidence="1">
    <location>
        <begin position="326"/>
        <end position="327"/>
    </location>
    <ligand>
        <name>FMN</name>
        <dbReference type="ChEBI" id="CHEBI:58210"/>
    </ligand>
</feature>
<dbReference type="EC" id="1.3.5.2" evidence="1"/>
<dbReference type="EMBL" id="CP000884">
    <property type="protein sequence ID" value="ABX36619.1"/>
    <property type="molecule type" value="Genomic_DNA"/>
</dbReference>
<dbReference type="RefSeq" id="WP_012205813.1">
    <property type="nucleotide sequence ID" value="NC_010002.1"/>
</dbReference>
<dbReference type="SMR" id="A9BWU2"/>
<dbReference type="STRING" id="398578.Daci_3988"/>
<dbReference type="GeneID" id="24116217"/>
<dbReference type="KEGG" id="dac:Daci_3988"/>
<dbReference type="eggNOG" id="COG0167">
    <property type="taxonomic scope" value="Bacteria"/>
</dbReference>
<dbReference type="HOGENOM" id="CLU_013640_2_0_4"/>
<dbReference type="UniPathway" id="UPA00070">
    <property type="reaction ID" value="UER00946"/>
</dbReference>
<dbReference type="Proteomes" id="UP000000784">
    <property type="component" value="Chromosome"/>
</dbReference>
<dbReference type="GO" id="GO:0005737">
    <property type="term" value="C:cytoplasm"/>
    <property type="evidence" value="ECO:0007669"/>
    <property type="project" value="InterPro"/>
</dbReference>
<dbReference type="GO" id="GO:0005886">
    <property type="term" value="C:plasma membrane"/>
    <property type="evidence" value="ECO:0007669"/>
    <property type="project" value="UniProtKB-SubCell"/>
</dbReference>
<dbReference type="GO" id="GO:0106430">
    <property type="term" value="F:dihydroorotate dehydrogenase (quinone) activity"/>
    <property type="evidence" value="ECO:0007669"/>
    <property type="project" value="UniProtKB-EC"/>
</dbReference>
<dbReference type="GO" id="GO:0006207">
    <property type="term" value="P:'de novo' pyrimidine nucleobase biosynthetic process"/>
    <property type="evidence" value="ECO:0007669"/>
    <property type="project" value="InterPro"/>
</dbReference>
<dbReference type="GO" id="GO:0044205">
    <property type="term" value="P:'de novo' UMP biosynthetic process"/>
    <property type="evidence" value="ECO:0007669"/>
    <property type="project" value="UniProtKB-UniRule"/>
</dbReference>
<dbReference type="CDD" id="cd04738">
    <property type="entry name" value="DHOD_2_like"/>
    <property type="match status" value="1"/>
</dbReference>
<dbReference type="Gene3D" id="3.20.20.70">
    <property type="entry name" value="Aldolase class I"/>
    <property type="match status" value="1"/>
</dbReference>
<dbReference type="HAMAP" id="MF_00225">
    <property type="entry name" value="DHO_dh_type2"/>
    <property type="match status" value="1"/>
</dbReference>
<dbReference type="InterPro" id="IPR013785">
    <property type="entry name" value="Aldolase_TIM"/>
</dbReference>
<dbReference type="InterPro" id="IPR050074">
    <property type="entry name" value="DHO_dehydrogenase"/>
</dbReference>
<dbReference type="InterPro" id="IPR012135">
    <property type="entry name" value="Dihydroorotate_DH_1_2"/>
</dbReference>
<dbReference type="InterPro" id="IPR005719">
    <property type="entry name" value="Dihydroorotate_DH_2"/>
</dbReference>
<dbReference type="InterPro" id="IPR005720">
    <property type="entry name" value="Dihydroorotate_DH_cat"/>
</dbReference>
<dbReference type="InterPro" id="IPR001295">
    <property type="entry name" value="Dihydroorotate_DH_CS"/>
</dbReference>
<dbReference type="NCBIfam" id="NF003644">
    <property type="entry name" value="PRK05286.1-1"/>
    <property type="match status" value="1"/>
</dbReference>
<dbReference type="NCBIfam" id="NF003645">
    <property type="entry name" value="PRK05286.1-2"/>
    <property type="match status" value="1"/>
</dbReference>
<dbReference type="NCBIfam" id="NF003646">
    <property type="entry name" value="PRK05286.1-4"/>
    <property type="match status" value="1"/>
</dbReference>
<dbReference type="NCBIfam" id="NF003652">
    <property type="entry name" value="PRK05286.2-5"/>
    <property type="match status" value="1"/>
</dbReference>
<dbReference type="NCBIfam" id="TIGR01036">
    <property type="entry name" value="pyrD_sub2"/>
    <property type="match status" value="1"/>
</dbReference>
<dbReference type="PANTHER" id="PTHR48109:SF4">
    <property type="entry name" value="DIHYDROOROTATE DEHYDROGENASE (QUINONE), MITOCHONDRIAL"/>
    <property type="match status" value="1"/>
</dbReference>
<dbReference type="PANTHER" id="PTHR48109">
    <property type="entry name" value="DIHYDROOROTATE DEHYDROGENASE (QUINONE), MITOCHONDRIAL-RELATED"/>
    <property type="match status" value="1"/>
</dbReference>
<dbReference type="Pfam" id="PF01180">
    <property type="entry name" value="DHO_dh"/>
    <property type="match status" value="1"/>
</dbReference>
<dbReference type="PIRSF" id="PIRSF000164">
    <property type="entry name" value="DHO_oxidase"/>
    <property type="match status" value="1"/>
</dbReference>
<dbReference type="SUPFAM" id="SSF51395">
    <property type="entry name" value="FMN-linked oxidoreductases"/>
    <property type="match status" value="1"/>
</dbReference>
<dbReference type="PROSITE" id="PS00911">
    <property type="entry name" value="DHODEHASE_1"/>
    <property type="match status" value="1"/>
</dbReference>
<dbReference type="PROSITE" id="PS00912">
    <property type="entry name" value="DHODEHASE_2"/>
    <property type="match status" value="1"/>
</dbReference>
<accession>A9BWU2</accession>
<name>PYRD_DELAS</name>